<name>CUTC_KLEP3</name>
<sequence length="247" mass="26459">MAVLEVCCYSMACAREAERCGADRIELCAAPQEGGLTPSYGVLVSVREAITLPVHPIVRPRGGDFCYTEQEFAAMLSDIRMVRELGFPGLVTGVLNADGQVDIPRMKKIMAAAGPLAVTFHRAFDLCADPRQAWKTLGELGVKRILTSGQQSSAEKGISLITELIAAGDTPIIMAGAGVRAANLPLLLQAGVKEVHSSAGQWLPSDMRFRHPGVSMSADPDADEYRRYAVNGEAVAEMKGIISAWRS</sequence>
<protein>
    <recommendedName>
        <fullName evidence="1">PF03932 family protein CutC</fullName>
    </recommendedName>
</protein>
<comment type="subcellular location">
    <subcellularLocation>
        <location evidence="1">Cytoplasm</location>
    </subcellularLocation>
</comment>
<comment type="similarity">
    <text evidence="1">Belongs to the CutC family.</text>
</comment>
<comment type="caution">
    <text evidence="1">Once thought to be involved in copper homeostasis, experiments in E.coli have shown this is not the case.</text>
</comment>
<evidence type="ECO:0000255" key="1">
    <source>
        <dbReference type="HAMAP-Rule" id="MF_00795"/>
    </source>
</evidence>
<keyword id="KW-0963">Cytoplasm</keyword>
<feature type="chain" id="PRO_1000133839" description="PF03932 family protein CutC">
    <location>
        <begin position="1"/>
        <end position="247"/>
    </location>
</feature>
<proteinExistence type="inferred from homology"/>
<gene>
    <name evidence="1" type="primary">cutC</name>
    <name type="ordered locus">KPK_1898</name>
</gene>
<organism>
    <name type="scientific">Klebsiella pneumoniae (strain 342)</name>
    <dbReference type="NCBI Taxonomy" id="507522"/>
    <lineage>
        <taxon>Bacteria</taxon>
        <taxon>Pseudomonadati</taxon>
        <taxon>Pseudomonadota</taxon>
        <taxon>Gammaproteobacteria</taxon>
        <taxon>Enterobacterales</taxon>
        <taxon>Enterobacteriaceae</taxon>
        <taxon>Klebsiella/Raoultella group</taxon>
        <taxon>Klebsiella</taxon>
        <taxon>Klebsiella pneumoniae complex</taxon>
    </lineage>
</organism>
<dbReference type="EMBL" id="CP000964">
    <property type="protein sequence ID" value="ACI10430.1"/>
    <property type="molecule type" value="Genomic_DNA"/>
</dbReference>
<dbReference type="SMR" id="B5XPZ4"/>
<dbReference type="KEGG" id="kpe:KPK_1898"/>
<dbReference type="HOGENOM" id="CLU_050555_3_1_6"/>
<dbReference type="Proteomes" id="UP000001734">
    <property type="component" value="Chromosome"/>
</dbReference>
<dbReference type="GO" id="GO:0005737">
    <property type="term" value="C:cytoplasm"/>
    <property type="evidence" value="ECO:0007669"/>
    <property type="project" value="UniProtKB-SubCell"/>
</dbReference>
<dbReference type="GO" id="GO:0005507">
    <property type="term" value="F:copper ion binding"/>
    <property type="evidence" value="ECO:0007669"/>
    <property type="project" value="TreeGrafter"/>
</dbReference>
<dbReference type="FunFam" id="3.20.20.380:FF:000001">
    <property type="entry name" value="Copper homeostasis protein CutC"/>
    <property type="match status" value="1"/>
</dbReference>
<dbReference type="Gene3D" id="3.20.20.380">
    <property type="entry name" value="Copper homeostasis (CutC) domain"/>
    <property type="match status" value="1"/>
</dbReference>
<dbReference type="HAMAP" id="MF_00795">
    <property type="entry name" value="CutC"/>
    <property type="match status" value="1"/>
</dbReference>
<dbReference type="InterPro" id="IPR005627">
    <property type="entry name" value="CutC-like"/>
</dbReference>
<dbReference type="InterPro" id="IPR036822">
    <property type="entry name" value="CutC-like_dom_sf"/>
</dbReference>
<dbReference type="NCBIfam" id="NF008603">
    <property type="entry name" value="PRK11572.1"/>
    <property type="match status" value="1"/>
</dbReference>
<dbReference type="PANTHER" id="PTHR12598">
    <property type="entry name" value="COPPER HOMEOSTASIS PROTEIN CUTC"/>
    <property type="match status" value="1"/>
</dbReference>
<dbReference type="PANTHER" id="PTHR12598:SF0">
    <property type="entry name" value="COPPER HOMEOSTASIS PROTEIN CUTC HOMOLOG"/>
    <property type="match status" value="1"/>
</dbReference>
<dbReference type="Pfam" id="PF03932">
    <property type="entry name" value="CutC"/>
    <property type="match status" value="1"/>
</dbReference>
<dbReference type="SUPFAM" id="SSF110395">
    <property type="entry name" value="CutC-like"/>
    <property type="match status" value="1"/>
</dbReference>
<reference key="1">
    <citation type="journal article" date="2008" name="PLoS Genet.">
        <title>Complete genome sequence of the N2-fixing broad host range endophyte Klebsiella pneumoniae 342 and virulence predictions verified in mice.</title>
        <authorList>
            <person name="Fouts D.E."/>
            <person name="Tyler H.L."/>
            <person name="DeBoy R.T."/>
            <person name="Daugherty S."/>
            <person name="Ren Q."/>
            <person name="Badger J.H."/>
            <person name="Durkin A.S."/>
            <person name="Huot H."/>
            <person name="Shrivastava S."/>
            <person name="Kothari S."/>
            <person name="Dodson R.J."/>
            <person name="Mohamoud Y."/>
            <person name="Khouri H."/>
            <person name="Roesch L.F.W."/>
            <person name="Krogfelt K.A."/>
            <person name="Struve C."/>
            <person name="Triplett E.W."/>
            <person name="Methe B.A."/>
        </authorList>
    </citation>
    <scope>NUCLEOTIDE SEQUENCE [LARGE SCALE GENOMIC DNA]</scope>
    <source>
        <strain>342</strain>
    </source>
</reference>
<accession>B5XPZ4</accession>